<proteinExistence type="inferred from homology"/>
<protein>
    <recommendedName>
        <fullName evidence="1">UvrABC system protein B</fullName>
        <shortName evidence="1">Protein UvrB</shortName>
    </recommendedName>
    <alternativeName>
        <fullName evidence="1">Excinuclease ABC subunit B</fullName>
    </alternativeName>
</protein>
<organism>
    <name type="scientific">Escherichia coli O17:K52:H18 (strain UMN026 / ExPEC)</name>
    <dbReference type="NCBI Taxonomy" id="585056"/>
    <lineage>
        <taxon>Bacteria</taxon>
        <taxon>Pseudomonadati</taxon>
        <taxon>Pseudomonadota</taxon>
        <taxon>Gammaproteobacteria</taxon>
        <taxon>Enterobacterales</taxon>
        <taxon>Enterobacteriaceae</taxon>
        <taxon>Escherichia</taxon>
    </lineage>
</organism>
<dbReference type="EMBL" id="CU928163">
    <property type="protein sequence ID" value="CAR12130.1"/>
    <property type="molecule type" value="Genomic_DNA"/>
</dbReference>
<dbReference type="RefSeq" id="WP_000042533.1">
    <property type="nucleotide sequence ID" value="NC_011751.1"/>
</dbReference>
<dbReference type="RefSeq" id="YP_002411675.1">
    <property type="nucleotide sequence ID" value="NC_011751.1"/>
</dbReference>
<dbReference type="SMR" id="B7NA78"/>
<dbReference type="STRING" id="585056.ECUMN_0921"/>
<dbReference type="GeneID" id="93776651"/>
<dbReference type="KEGG" id="eum:ECUMN_0921"/>
<dbReference type="PATRIC" id="fig|585056.7.peg.1116"/>
<dbReference type="HOGENOM" id="CLU_009621_2_1_6"/>
<dbReference type="Proteomes" id="UP000007097">
    <property type="component" value="Chromosome"/>
</dbReference>
<dbReference type="GO" id="GO:0005737">
    <property type="term" value="C:cytoplasm"/>
    <property type="evidence" value="ECO:0007669"/>
    <property type="project" value="UniProtKB-SubCell"/>
</dbReference>
<dbReference type="GO" id="GO:0009380">
    <property type="term" value="C:excinuclease repair complex"/>
    <property type="evidence" value="ECO:0007669"/>
    <property type="project" value="InterPro"/>
</dbReference>
<dbReference type="GO" id="GO:0005524">
    <property type="term" value="F:ATP binding"/>
    <property type="evidence" value="ECO:0007669"/>
    <property type="project" value="UniProtKB-UniRule"/>
</dbReference>
<dbReference type="GO" id="GO:0016887">
    <property type="term" value="F:ATP hydrolysis activity"/>
    <property type="evidence" value="ECO:0007669"/>
    <property type="project" value="InterPro"/>
</dbReference>
<dbReference type="GO" id="GO:0003677">
    <property type="term" value="F:DNA binding"/>
    <property type="evidence" value="ECO:0007669"/>
    <property type="project" value="UniProtKB-UniRule"/>
</dbReference>
<dbReference type="GO" id="GO:0009381">
    <property type="term" value="F:excinuclease ABC activity"/>
    <property type="evidence" value="ECO:0007669"/>
    <property type="project" value="UniProtKB-UniRule"/>
</dbReference>
<dbReference type="GO" id="GO:0004386">
    <property type="term" value="F:helicase activity"/>
    <property type="evidence" value="ECO:0007669"/>
    <property type="project" value="UniProtKB-KW"/>
</dbReference>
<dbReference type="GO" id="GO:0006289">
    <property type="term" value="P:nucleotide-excision repair"/>
    <property type="evidence" value="ECO:0007669"/>
    <property type="project" value="UniProtKB-UniRule"/>
</dbReference>
<dbReference type="GO" id="GO:0009432">
    <property type="term" value="P:SOS response"/>
    <property type="evidence" value="ECO:0007669"/>
    <property type="project" value="UniProtKB-UniRule"/>
</dbReference>
<dbReference type="CDD" id="cd17916">
    <property type="entry name" value="DEXHc_UvrB"/>
    <property type="match status" value="1"/>
</dbReference>
<dbReference type="CDD" id="cd18790">
    <property type="entry name" value="SF2_C_UvrB"/>
    <property type="match status" value="1"/>
</dbReference>
<dbReference type="FunFam" id="3.40.50.300:FF:000257">
    <property type="entry name" value="UvrABC system protein B"/>
    <property type="match status" value="1"/>
</dbReference>
<dbReference type="FunFam" id="3.40.50.300:FF:000401">
    <property type="entry name" value="UvrABC system protein B"/>
    <property type="match status" value="1"/>
</dbReference>
<dbReference type="FunFam" id="3.40.50.300:FF:000477">
    <property type="entry name" value="UvrABC system protein B"/>
    <property type="match status" value="1"/>
</dbReference>
<dbReference type="Gene3D" id="3.40.50.300">
    <property type="entry name" value="P-loop containing nucleotide triphosphate hydrolases"/>
    <property type="match status" value="3"/>
</dbReference>
<dbReference type="Gene3D" id="4.10.860.10">
    <property type="entry name" value="UVR domain"/>
    <property type="match status" value="1"/>
</dbReference>
<dbReference type="HAMAP" id="MF_00204">
    <property type="entry name" value="UvrB"/>
    <property type="match status" value="1"/>
</dbReference>
<dbReference type="InterPro" id="IPR006935">
    <property type="entry name" value="Helicase/UvrB_N"/>
</dbReference>
<dbReference type="InterPro" id="IPR014001">
    <property type="entry name" value="Helicase_ATP-bd"/>
</dbReference>
<dbReference type="InterPro" id="IPR001650">
    <property type="entry name" value="Helicase_C-like"/>
</dbReference>
<dbReference type="InterPro" id="IPR027417">
    <property type="entry name" value="P-loop_NTPase"/>
</dbReference>
<dbReference type="InterPro" id="IPR001943">
    <property type="entry name" value="UVR_dom"/>
</dbReference>
<dbReference type="InterPro" id="IPR036876">
    <property type="entry name" value="UVR_dom_sf"/>
</dbReference>
<dbReference type="InterPro" id="IPR004807">
    <property type="entry name" value="UvrB"/>
</dbReference>
<dbReference type="InterPro" id="IPR041471">
    <property type="entry name" value="UvrB_inter"/>
</dbReference>
<dbReference type="InterPro" id="IPR024759">
    <property type="entry name" value="UvrB_YAD/RRR_dom"/>
</dbReference>
<dbReference type="NCBIfam" id="NF003673">
    <property type="entry name" value="PRK05298.1"/>
    <property type="match status" value="1"/>
</dbReference>
<dbReference type="NCBIfam" id="TIGR00631">
    <property type="entry name" value="uvrb"/>
    <property type="match status" value="1"/>
</dbReference>
<dbReference type="PANTHER" id="PTHR24029">
    <property type="entry name" value="UVRABC SYSTEM PROTEIN B"/>
    <property type="match status" value="1"/>
</dbReference>
<dbReference type="PANTHER" id="PTHR24029:SF0">
    <property type="entry name" value="UVRABC SYSTEM PROTEIN B"/>
    <property type="match status" value="1"/>
</dbReference>
<dbReference type="Pfam" id="PF00271">
    <property type="entry name" value="Helicase_C"/>
    <property type="match status" value="1"/>
</dbReference>
<dbReference type="Pfam" id="PF04851">
    <property type="entry name" value="ResIII"/>
    <property type="match status" value="1"/>
</dbReference>
<dbReference type="Pfam" id="PF02151">
    <property type="entry name" value="UVR"/>
    <property type="match status" value="1"/>
</dbReference>
<dbReference type="Pfam" id="PF12344">
    <property type="entry name" value="UvrB"/>
    <property type="match status" value="1"/>
</dbReference>
<dbReference type="Pfam" id="PF17757">
    <property type="entry name" value="UvrB_inter"/>
    <property type="match status" value="1"/>
</dbReference>
<dbReference type="SMART" id="SM00487">
    <property type="entry name" value="DEXDc"/>
    <property type="match status" value="1"/>
</dbReference>
<dbReference type="SMART" id="SM00490">
    <property type="entry name" value="HELICc"/>
    <property type="match status" value="1"/>
</dbReference>
<dbReference type="SUPFAM" id="SSF46600">
    <property type="entry name" value="C-terminal UvrC-binding domain of UvrB"/>
    <property type="match status" value="1"/>
</dbReference>
<dbReference type="SUPFAM" id="SSF52540">
    <property type="entry name" value="P-loop containing nucleoside triphosphate hydrolases"/>
    <property type="match status" value="2"/>
</dbReference>
<dbReference type="PROSITE" id="PS51192">
    <property type="entry name" value="HELICASE_ATP_BIND_1"/>
    <property type="match status" value="1"/>
</dbReference>
<dbReference type="PROSITE" id="PS51194">
    <property type="entry name" value="HELICASE_CTER"/>
    <property type="match status" value="1"/>
</dbReference>
<dbReference type="PROSITE" id="PS50151">
    <property type="entry name" value="UVR"/>
    <property type="match status" value="1"/>
</dbReference>
<evidence type="ECO:0000255" key="1">
    <source>
        <dbReference type="HAMAP-Rule" id="MF_00204"/>
    </source>
</evidence>
<evidence type="ECO:0000256" key="2">
    <source>
        <dbReference type="SAM" id="MobiDB-lite"/>
    </source>
</evidence>
<keyword id="KW-0067">ATP-binding</keyword>
<keyword id="KW-0963">Cytoplasm</keyword>
<keyword id="KW-0227">DNA damage</keyword>
<keyword id="KW-0228">DNA excision</keyword>
<keyword id="KW-0234">DNA repair</keyword>
<keyword id="KW-0267">Excision nuclease</keyword>
<keyword id="KW-0347">Helicase</keyword>
<keyword id="KW-0378">Hydrolase</keyword>
<keyword id="KW-0547">Nucleotide-binding</keyword>
<keyword id="KW-0742">SOS response</keyword>
<gene>
    <name evidence="1" type="primary">uvrB</name>
    <name type="ordered locus">ECUMN_0921</name>
</gene>
<sequence length="673" mass="76226">MSKPFKLNSAFKPSGDQPEAIRRLEEGLEDGLAHQTLLGVTGSGKTFTIANVIADLQRPTMVLAPNKTLAAQLYGEMKEFFPENAVEYFVSYYDYYQPEAYVPSSDTFIEKDASVNEHIEQMRLSATKAMLERRDVVVVASVSAIYGLGDPDLYLKMMLHLTVGMIIDQRAILRRLAELQYARNDQAFQRGTFRVRGEVIDIFPAESDDIALRVELFDEEVERLSLFDPLTGQIVSTIPRFTIYPKTHYVTPRERIVQAMEEIKEELAARRKVLLENNKLLEEQRLTQRTQFDLEMMNELGYCSGIENYSRFLSGRGPGEPPPTLFDYLPADGLLVVDESHVTIPQIGGMYRGDRARKETLVEYGFRLPSALDNRPLKFEEFEALAPQTIYVSATPGNYELEKSGGDVVDQVVRPTGLLDPIIEVRPVATQVDDLLSEIRQRAAINERVLVTTLTKRMAEDLTEYLEEHGERVRYLHSDIDTVERMEIIRDLRLGEFDVLVGINLLREGLDMPEVSLVAILDADKEGFLRSERSLIQTIGRAARNVNGKAILYGDKITPSMAKAIGETERRREKQQKYNEEHGITPQGLNKKVVDILALGQNIAKTKAKGRGKSRPIVEPDNVPMDMSPKALQQKIHELEGLMMQHAQNLEFEEAAQIRDQLHQLRELFIAAS</sequence>
<name>UVRB_ECOLU</name>
<accession>B7NA78</accession>
<reference key="1">
    <citation type="journal article" date="2009" name="PLoS Genet.">
        <title>Organised genome dynamics in the Escherichia coli species results in highly diverse adaptive paths.</title>
        <authorList>
            <person name="Touchon M."/>
            <person name="Hoede C."/>
            <person name="Tenaillon O."/>
            <person name="Barbe V."/>
            <person name="Baeriswyl S."/>
            <person name="Bidet P."/>
            <person name="Bingen E."/>
            <person name="Bonacorsi S."/>
            <person name="Bouchier C."/>
            <person name="Bouvet O."/>
            <person name="Calteau A."/>
            <person name="Chiapello H."/>
            <person name="Clermont O."/>
            <person name="Cruveiller S."/>
            <person name="Danchin A."/>
            <person name="Diard M."/>
            <person name="Dossat C."/>
            <person name="Karoui M.E."/>
            <person name="Frapy E."/>
            <person name="Garry L."/>
            <person name="Ghigo J.M."/>
            <person name="Gilles A.M."/>
            <person name="Johnson J."/>
            <person name="Le Bouguenec C."/>
            <person name="Lescat M."/>
            <person name="Mangenot S."/>
            <person name="Martinez-Jehanne V."/>
            <person name="Matic I."/>
            <person name="Nassif X."/>
            <person name="Oztas S."/>
            <person name="Petit M.A."/>
            <person name="Pichon C."/>
            <person name="Rouy Z."/>
            <person name="Ruf C.S."/>
            <person name="Schneider D."/>
            <person name="Tourret J."/>
            <person name="Vacherie B."/>
            <person name="Vallenet D."/>
            <person name="Medigue C."/>
            <person name="Rocha E.P.C."/>
            <person name="Denamur E."/>
        </authorList>
    </citation>
    <scope>NUCLEOTIDE SEQUENCE [LARGE SCALE GENOMIC DNA]</scope>
    <source>
        <strain>UMN026 / ExPEC</strain>
    </source>
</reference>
<comment type="function">
    <text evidence="1">The UvrABC repair system catalyzes the recognition and processing of DNA lesions. A damage recognition complex composed of 2 UvrA and 2 UvrB subunits scans DNA for abnormalities. Upon binding of the UvrA(2)B(2) complex to a putative damaged site, the DNA wraps around one UvrB monomer. DNA wrap is dependent on ATP binding by UvrB and probably causes local melting of the DNA helix, facilitating insertion of UvrB beta-hairpin between the DNA strands. Then UvrB probes one DNA strand for the presence of a lesion. If a lesion is found the UvrA subunits dissociate and the UvrB-DNA preincision complex is formed. This complex is subsequently bound by UvrC and the second UvrB is released. If no lesion is found, the DNA wraps around the other UvrB subunit that will check the other stand for damage.</text>
</comment>
<comment type="subunit">
    <text evidence="1">Forms a heterotetramer with UvrA during the search for lesions. Interacts with UvrC in an incision complex.</text>
</comment>
<comment type="subcellular location">
    <subcellularLocation>
        <location evidence="1">Cytoplasm</location>
    </subcellularLocation>
</comment>
<comment type="domain">
    <text evidence="1">The beta-hairpin motif is involved in DNA binding.</text>
</comment>
<comment type="similarity">
    <text evidence="1">Belongs to the UvrB family.</text>
</comment>
<feature type="chain" id="PRO_1000200543" description="UvrABC system protein B">
    <location>
        <begin position="1"/>
        <end position="673"/>
    </location>
</feature>
<feature type="domain" description="Helicase ATP-binding" evidence="1">
    <location>
        <begin position="26"/>
        <end position="183"/>
    </location>
</feature>
<feature type="domain" description="Helicase C-terminal" evidence="1">
    <location>
        <begin position="431"/>
        <end position="597"/>
    </location>
</feature>
<feature type="domain" description="UVR" evidence="1">
    <location>
        <begin position="633"/>
        <end position="668"/>
    </location>
</feature>
<feature type="region of interest" description="Disordered" evidence="2">
    <location>
        <begin position="608"/>
        <end position="627"/>
    </location>
</feature>
<feature type="short sequence motif" description="Beta-hairpin">
    <location>
        <begin position="92"/>
        <end position="115"/>
    </location>
</feature>
<feature type="binding site" evidence="1">
    <location>
        <begin position="39"/>
        <end position="46"/>
    </location>
    <ligand>
        <name>ATP</name>
        <dbReference type="ChEBI" id="CHEBI:30616"/>
    </ligand>
</feature>